<dbReference type="EC" id="1.4.3.13" evidence="3"/>
<dbReference type="EMBL" id="AK034957">
    <property type="protein sequence ID" value="BAC28894.1"/>
    <property type="molecule type" value="mRNA"/>
</dbReference>
<dbReference type="EMBL" id="AK045019">
    <property type="protein sequence ID" value="BAC32186.1"/>
    <property type="molecule type" value="mRNA"/>
</dbReference>
<dbReference type="EMBL" id="AK081898">
    <property type="protein sequence ID" value="BAC38364.1"/>
    <property type="molecule type" value="mRNA"/>
</dbReference>
<dbReference type="EMBL" id="AK145323">
    <property type="protein sequence ID" value="BAE26367.1"/>
    <property type="molecule type" value="mRNA"/>
</dbReference>
<dbReference type="EMBL" id="AK159386">
    <property type="protein sequence ID" value="BAE35041.1"/>
    <property type="molecule type" value="mRNA"/>
</dbReference>
<dbReference type="EMBL" id="AF117951">
    <property type="protein sequence ID" value="AAF29046.1"/>
    <property type="molecule type" value="mRNA"/>
</dbReference>
<dbReference type="CCDS" id="CCDS27241.1">
    <molecule id="P58022-1"/>
</dbReference>
<dbReference type="RefSeq" id="NP_201582.2">
    <molecule id="P58022-1"/>
    <property type="nucleotide sequence ID" value="NM_033325.2"/>
</dbReference>
<dbReference type="RefSeq" id="XP_006519810.1">
    <molecule id="P58022-1"/>
    <property type="nucleotide sequence ID" value="XM_006519747.3"/>
</dbReference>
<dbReference type="SMR" id="P58022"/>
<dbReference type="BioGRID" id="220507">
    <property type="interactions" value="4"/>
</dbReference>
<dbReference type="BioGRID" id="3404648">
    <property type="interactions" value="1"/>
</dbReference>
<dbReference type="FunCoup" id="P58022">
    <property type="interactions" value="110"/>
</dbReference>
<dbReference type="IntAct" id="P58022">
    <property type="interactions" value="1"/>
</dbReference>
<dbReference type="MINT" id="P58022"/>
<dbReference type="STRING" id="10090.ENSMUSP00000022660"/>
<dbReference type="BindingDB" id="P58022"/>
<dbReference type="ChEMBL" id="CHEMBL4105831"/>
<dbReference type="GlyCosmos" id="P58022">
    <property type="glycosylation" value="4 sites, No reported glycans"/>
</dbReference>
<dbReference type="GlyGen" id="P58022">
    <property type="glycosylation" value="4 sites"/>
</dbReference>
<dbReference type="PhosphoSitePlus" id="P58022"/>
<dbReference type="jPOST" id="P58022"/>
<dbReference type="PaxDb" id="10090-ENSMUSP00000022660"/>
<dbReference type="PeptideAtlas" id="P58022"/>
<dbReference type="ProteomicsDB" id="286231">
    <molecule id="P58022-1"/>
</dbReference>
<dbReference type="ProteomicsDB" id="287256">
    <molecule id="P58022-2"/>
</dbReference>
<dbReference type="Antibodypedia" id="22758">
    <property type="antibodies" value="464 antibodies from 36 providers"/>
</dbReference>
<dbReference type="DNASU" id="94352"/>
<dbReference type="Ensembl" id="ENSMUST00000022660.14">
    <molecule id="P58022-1"/>
    <property type="protein sequence ID" value="ENSMUSP00000022660.7"/>
    <property type="gene ID" value="ENSMUSG00000034205.17"/>
</dbReference>
<dbReference type="Ensembl" id="ENSMUST00000100420.4">
    <molecule id="P58022-1"/>
    <property type="protein sequence ID" value="ENSMUSP00000097987.3"/>
    <property type="gene ID" value="ENSMUSG00000034205.17"/>
</dbReference>
<dbReference type="GeneID" id="94352"/>
<dbReference type="KEGG" id="mmu:94352"/>
<dbReference type="UCSC" id="uc007umn.3">
    <molecule id="P58022-1"/>
    <property type="organism name" value="mouse"/>
</dbReference>
<dbReference type="AGR" id="MGI:2137913"/>
<dbReference type="CTD" id="4017"/>
<dbReference type="MGI" id="MGI:2137913">
    <property type="gene designation" value="Loxl2"/>
</dbReference>
<dbReference type="VEuPathDB" id="HostDB:ENSMUSG00000034205"/>
<dbReference type="eggNOG" id="ENOG502QSX8">
    <property type="taxonomic scope" value="Eukaryota"/>
</dbReference>
<dbReference type="GeneTree" id="ENSGT00940000155874"/>
<dbReference type="HOGENOM" id="CLU_002555_3_0_1"/>
<dbReference type="InParanoid" id="P58022"/>
<dbReference type="OMA" id="MALSHCR"/>
<dbReference type="OrthoDB" id="547291at2759"/>
<dbReference type="PhylomeDB" id="P58022"/>
<dbReference type="TreeFam" id="TF326061"/>
<dbReference type="Reactome" id="R-MMU-1566948">
    <property type="pathway name" value="Elastic fibre formation"/>
</dbReference>
<dbReference type="Reactome" id="R-MMU-2243919">
    <property type="pathway name" value="Crosslinking of collagen fibrils"/>
</dbReference>
<dbReference type="BioGRID-ORCS" id="94352">
    <property type="hits" value="1 hit in 79 CRISPR screens"/>
</dbReference>
<dbReference type="ChiTaRS" id="Loxl2">
    <property type="organism name" value="mouse"/>
</dbReference>
<dbReference type="PRO" id="PR:P58022"/>
<dbReference type="Proteomes" id="UP000000589">
    <property type="component" value="Chromosome 14"/>
</dbReference>
<dbReference type="RNAct" id="P58022">
    <property type="molecule type" value="protein"/>
</dbReference>
<dbReference type="Bgee" id="ENSMUSG00000034205">
    <property type="expression patterns" value="Expressed in vault of skull and 162 other cell types or tissues"/>
</dbReference>
<dbReference type="GO" id="GO:0005604">
    <property type="term" value="C:basement membrane"/>
    <property type="evidence" value="ECO:0000250"/>
    <property type="project" value="UniProtKB"/>
</dbReference>
<dbReference type="GO" id="GO:0000785">
    <property type="term" value="C:chromatin"/>
    <property type="evidence" value="ECO:0000250"/>
    <property type="project" value="UniProtKB"/>
</dbReference>
<dbReference type="GO" id="GO:0062023">
    <property type="term" value="C:collagen-containing extracellular matrix"/>
    <property type="evidence" value="ECO:0007005"/>
    <property type="project" value="BHF-UCL"/>
</dbReference>
<dbReference type="GO" id="GO:0005783">
    <property type="term" value="C:endoplasmic reticulum"/>
    <property type="evidence" value="ECO:0000250"/>
    <property type="project" value="UniProtKB"/>
</dbReference>
<dbReference type="GO" id="GO:0005615">
    <property type="term" value="C:extracellular space"/>
    <property type="evidence" value="ECO:0007005"/>
    <property type="project" value="BHF-UCL"/>
</dbReference>
<dbReference type="GO" id="GO:0016020">
    <property type="term" value="C:membrane"/>
    <property type="evidence" value="ECO:0007669"/>
    <property type="project" value="InterPro"/>
</dbReference>
<dbReference type="GO" id="GO:0005654">
    <property type="term" value="C:nucleoplasm"/>
    <property type="evidence" value="ECO:0007669"/>
    <property type="project" value="Ensembl"/>
</dbReference>
<dbReference type="GO" id="GO:0005634">
    <property type="term" value="C:nucleus"/>
    <property type="evidence" value="ECO:0000250"/>
    <property type="project" value="UniProtKB"/>
</dbReference>
<dbReference type="GO" id="GO:0005509">
    <property type="term" value="F:calcium ion binding"/>
    <property type="evidence" value="ECO:0000250"/>
    <property type="project" value="UniProtKB"/>
</dbReference>
<dbReference type="GO" id="GO:0005507">
    <property type="term" value="F:copper ion binding"/>
    <property type="evidence" value="ECO:0000250"/>
    <property type="project" value="UniProtKB"/>
</dbReference>
<dbReference type="GO" id="GO:0070492">
    <property type="term" value="F:oligosaccharide binding"/>
    <property type="evidence" value="ECO:0000250"/>
    <property type="project" value="UniProtKB"/>
</dbReference>
<dbReference type="GO" id="GO:0004720">
    <property type="term" value="F:protein-lysine 6-oxidase activity"/>
    <property type="evidence" value="ECO:0000250"/>
    <property type="project" value="UniProtKB"/>
</dbReference>
<dbReference type="GO" id="GO:0030199">
    <property type="term" value="P:collagen fibril organization"/>
    <property type="evidence" value="ECO:0000250"/>
    <property type="project" value="UniProtKB"/>
</dbReference>
<dbReference type="GO" id="GO:0043542">
    <property type="term" value="P:endothelial cell migration"/>
    <property type="evidence" value="ECO:0000250"/>
    <property type="project" value="UniProtKB"/>
</dbReference>
<dbReference type="GO" id="GO:0001935">
    <property type="term" value="P:endothelial cell proliferation"/>
    <property type="evidence" value="ECO:0000250"/>
    <property type="project" value="UniProtKB"/>
</dbReference>
<dbReference type="GO" id="GO:0001837">
    <property type="term" value="P:epithelial to mesenchymal transition"/>
    <property type="evidence" value="ECO:0000250"/>
    <property type="project" value="UniProtKB"/>
</dbReference>
<dbReference type="GO" id="GO:0070828">
    <property type="term" value="P:heterochromatin organization"/>
    <property type="evidence" value="ECO:0000250"/>
    <property type="project" value="UniProtKB"/>
</dbReference>
<dbReference type="GO" id="GO:0045892">
    <property type="term" value="P:negative regulation of DNA-templated transcription"/>
    <property type="evidence" value="ECO:0000250"/>
    <property type="project" value="UniProtKB"/>
</dbReference>
<dbReference type="GO" id="GO:1902455">
    <property type="term" value="P:negative regulation of stem cell population maintenance"/>
    <property type="evidence" value="ECO:0000314"/>
    <property type="project" value="UniProtKB"/>
</dbReference>
<dbReference type="GO" id="GO:0000122">
    <property type="term" value="P:negative regulation of transcription by RNA polymerase II"/>
    <property type="evidence" value="ECO:0000250"/>
    <property type="project" value="UniProtKB"/>
</dbReference>
<dbReference type="GO" id="GO:0018057">
    <property type="term" value="P:peptidyl-lysine oxidation"/>
    <property type="evidence" value="ECO:0000250"/>
    <property type="project" value="UniProtKB"/>
</dbReference>
<dbReference type="GO" id="GO:0032332">
    <property type="term" value="P:positive regulation of chondrocyte differentiation"/>
    <property type="evidence" value="ECO:0000315"/>
    <property type="project" value="UniProtKB"/>
</dbReference>
<dbReference type="GO" id="GO:0010718">
    <property type="term" value="P:positive regulation of epithelial to mesenchymal transition"/>
    <property type="evidence" value="ECO:0000250"/>
    <property type="project" value="UniProtKB"/>
</dbReference>
<dbReference type="GO" id="GO:0036211">
    <property type="term" value="P:protein modification process"/>
    <property type="evidence" value="ECO:0000250"/>
    <property type="project" value="UniProtKB"/>
</dbReference>
<dbReference type="GO" id="GO:0046688">
    <property type="term" value="P:response to copper ion"/>
    <property type="evidence" value="ECO:0000250"/>
    <property type="project" value="UniProtKB"/>
</dbReference>
<dbReference type="GO" id="GO:0001666">
    <property type="term" value="P:response to hypoxia"/>
    <property type="evidence" value="ECO:0000314"/>
    <property type="project" value="UniProtKB"/>
</dbReference>
<dbReference type="GO" id="GO:0002040">
    <property type="term" value="P:sprouting angiogenesis"/>
    <property type="evidence" value="ECO:0000250"/>
    <property type="project" value="UniProtKB"/>
</dbReference>
<dbReference type="FunFam" id="3.10.250.10:FF:000001">
    <property type="entry name" value="Lysyl oxidase 4 isoform X1"/>
    <property type="match status" value="2"/>
</dbReference>
<dbReference type="FunFam" id="3.10.250.10:FF:000008">
    <property type="entry name" value="Lysyl oxidase homolog 2"/>
    <property type="match status" value="1"/>
</dbReference>
<dbReference type="FunFam" id="3.10.250.10:FF:000014">
    <property type="entry name" value="Lysyl oxidase homolog 2"/>
    <property type="match status" value="1"/>
</dbReference>
<dbReference type="Gene3D" id="3.10.250.10">
    <property type="entry name" value="SRCR-like domain"/>
    <property type="match status" value="4"/>
</dbReference>
<dbReference type="InterPro" id="IPR050912">
    <property type="entry name" value="LOX-like_protein"/>
</dbReference>
<dbReference type="InterPro" id="IPR001695">
    <property type="entry name" value="Lysyl_oxidase"/>
</dbReference>
<dbReference type="InterPro" id="IPR019828">
    <property type="entry name" value="Lysyl_oxidase_CS"/>
</dbReference>
<dbReference type="InterPro" id="IPR001190">
    <property type="entry name" value="SRCR"/>
</dbReference>
<dbReference type="InterPro" id="IPR036772">
    <property type="entry name" value="SRCR-like_dom_sf"/>
</dbReference>
<dbReference type="PANTHER" id="PTHR45817:SF1">
    <property type="entry name" value="LYSYL OXIDASE HOMOLOG 2"/>
    <property type="match status" value="1"/>
</dbReference>
<dbReference type="PANTHER" id="PTHR45817">
    <property type="entry name" value="LYSYL OXIDASE-LIKE-RELATED"/>
    <property type="match status" value="1"/>
</dbReference>
<dbReference type="Pfam" id="PF01186">
    <property type="entry name" value="Lysyl_oxidase"/>
    <property type="match status" value="1"/>
</dbReference>
<dbReference type="Pfam" id="PF00530">
    <property type="entry name" value="SRCR"/>
    <property type="match status" value="4"/>
</dbReference>
<dbReference type="PRINTS" id="PR00074">
    <property type="entry name" value="LYSYLOXIDASE"/>
</dbReference>
<dbReference type="PRINTS" id="PR00258">
    <property type="entry name" value="SPERACTRCPTR"/>
</dbReference>
<dbReference type="SMART" id="SM00202">
    <property type="entry name" value="SR"/>
    <property type="match status" value="4"/>
</dbReference>
<dbReference type="SUPFAM" id="SSF56487">
    <property type="entry name" value="SRCR-like"/>
    <property type="match status" value="4"/>
</dbReference>
<dbReference type="PROSITE" id="PS00926">
    <property type="entry name" value="LYSYL_OXIDASE"/>
    <property type="match status" value="1"/>
</dbReference>
<dbReference type="PROSITE" id="PS00420">
    <property type="entry name" value="SRCR_1"/>
    <property type="match status" value="2"/>
</dbReference>
<dbReference type="PROSITE" id="PS50287">
    <property type="entry name" value="SRCR_2"/>
    <property type="match status" value="4"/>
</dbReference>
<proteinExistence type="evidence at protein level"/>
<sequence>MELHFGSCLSGCLALLVLLPSLSLAQYEGWPYQLQYPEYFQQPAPEHHQRQVPSDVVKIQVRLAGQKRKHNEGRVEVYYEGQWGTVCDDDFSIHAAHVVCRQVGYVEAKSWAASSSYGPGEGPIWLDNIYCTGKESTLASCSSNGWGVTDCKHTEDVGVVCSEKRIPGFKFDNSLINQIESLNIQVEDIRIRPILSAFRHRKPVTEGYVEVKEGKAWKQICNKHWTAKNSHVVCGMFGFPAEKTYNPKAYKTFASRRKLRYWKFSMNCTGTEAHISSCKLGPSVTRDPVKNATCENGQPAVVSCVPSQIFSPDGPSRFRKAYKPEQPLVRLRGGAQVGEGRVEVLKNGEWGTICDDKWDLVSASVVCRELGFGTAKEAITGSRLGQGIGPIHLNEVQCTGTEKSIIDCKFNTESQGCNHEEDAGVRCNIPIMGFQKKVRLNGGRNPYEGRVEVLTERNGSLVWGTVCGQNWGIVEAMVVCRQLGLGFASNAFQETWYWHGNIFANNVVMSGVKCSGTELSLAHCRHDEEVACPEGGVRFGAGVACSETAPDLVLNAEIVQQTAYLEDRPMSLLQCAMEENCLSASAVHTDPTRGHRRLLRFSSQIHNNGQSDFRPKNGRHAWIWHDCHRHYHSMEVFTYYDLLSLNGTKVAEGHKASFCLEDTECEGDIQKSYECANFGEQGITMGCWDMYRHDIDCQWIDITDVPPGDYLFQVVINPNYEVPESDFSNNIMKCRSRYDGYRIWMYNCHVGGAFSEETEQKFEHFSGLLNNQLSVQ</sequence>
<name>LOXL2_MOUSE</name>
<protein>
    <recommendedName>
        <fullName>Lysyl oxidase homolog 2</fullName>
        <ecNumber evidence="3">1.4.3.13</ecNumber>
    </recommendedName>
    <alternativeName>
        <fullName>Lysyl oxidase-like protein 2</fullName>
    </alternativeName>
</protein>
<comment type="function">
    <text evidence="3 6 9">Mediates the post-translational oxidative deamination of lysine residues on target proteins leading to the formation of deaminated lysine (allysine) (By similarity). Acts as a transcription corepressor and specifically mediates deamination of trimethylated 'Lys-4' of histone H3 (H3K4me3), a specific tag for epigenetic transcriptional activation (By similarity). Shows no activity against histone H3 when it is trimethylated on 'Lys-9' (H3K9me3) or 'Lys-27' (H3K27me3) or when 'Lys-4' is monomethylated (H3K4me1) or dimethylated (H3K4me2) (By similarity). Also mediates deamination of methylated TAF10, a member of the transcription factor IID (TFIID) complex, which induces release of TAF10 from promoters, leading to inhibition of TFIID-dependent transcription (By similarity). LOXL2-mediated deamination of TAF10 results in transcriptional repression of genes required for embryonic stem cell pluripotency including POU5F1/OCT4, NANOG, KLF4 and SOX2 (PubMed:25959397). Involved in epithelial to mesenchymal transition (EMT) via interaction with SNAI1 and participates in repression of E-cadherin, probably by mediating deamination of histone H3 (By similarity). During EMT, involved with SNAI1 in negatively regulating pericentromeric heterochromatin transcription (By similarity). SNAI1 recruits LOXL2 to pericentromeric regions to oxidize histone H3 and repress transcription which leads to release of heterochromatin component CBX5/HP1A, enabling chromatin reorganization and acquisition of mesenchymal traits (By similarity). Interacts with the endoplasmic reticulum protein HSPA5 which activates the IRE1-XBP1 pathway of the unfolded protein response, leading to expression of several transcription factors involved in EMT and subsequent EMT induction (By similarity). When secreted into the extracellular matrix, promotes cross-linking of extracellular matrix proteins by mediating oxidative deamination of peptidyl lysine residues in precursors to fibrous collagen and elastin (By similarity). Acts as a regulator of sprouting angiogenesis, probably via collagen IV scaffolding (By similarity). Acts as a regulator of chondrocyte differentiation, probably by regulating expression of factors that control chondrocyte differentiation (PubMed:21071451).</text>
</comment>
<comment type="catalytic activity">
    <reaction evidence="3">
        <text>L-lysyl-[protein] + O2 + H2O = (S)-2-amino-6-oxohexanoyl-[protein] + H2O2 + NH4(+)</text>
        <dbReference type="Rhea" id="RHEA:24544"/>
        <dbReference type="Rhea" id="RHEA-COMP:9752"/>
        <dbReference type="Rhea" id="RHEA-COMP:12448"/>
        <dbReference type="ChEBI" id="CHEBI:15377"/>
        <dbReference type="ChEBI" id="CHEBI:15379"/>
        <dbReference type="ChEBI" id="CHEBI:16240"/>
        <dbReference type="ChEBI" id="CHEBI:28938"/>
        <dbReference type="ChEBI" id="CHEBI:29969"/>
        <dbReference type="ChEBI" id="CHEBI:131803"/>
        <dbReference type="EC" id="1.4.3.13"/>
    </reaction>
</comment>
<comment type="cofactor">
    <cofactor evidence="3">
        <name>Cu cation</name>
        <dbReference type="ChEBI" id="CHEBI:23378"/>
    </cofactor>
</comment>
<comment type="cofactor">
    <cofactor evidence="3">
        <name>lysine tyrosylquinone residue</name>
        <dbReference type="ChEBI" id="CHEBI:20489"/>
    </cofactor>
    <text evidence="2 3">Contains 1 lysine tyrosylquinone.</text>
</comment>
<comment type="activity regulation">
    <text evidence="3">Specifically inhibited by a mouse monoclonal antibody AB0023, inhibition occurs in a non-competitive manner.</text>
</comment>
<comment type="subunit">
    <text evidence="3">Component of some chromatin repressor complex. Interacts with SNAI1. Interacts with TAF10. Interacts with HSPA5. Interacts with EFEMP2 (By similarity).</text>
</comment>
<comment type="subcellular location">
    <subcellularLocation>
        <location evidence="3">Secreted</location>
        <location evidence="3">Extracellular space</location>
        <location evidence="3">Extracellular matrix</location>
        <location evidence="3">Basement membrane</location>
    </subcellularLocation>
    <subcellularLocation>
        <location evidence="3">Nucleus</location>
    </subcellularLocation>
    <subcellularLocation>
        <location evidence="3">Chromosome</location>
    </subcellularLocation>
    <subcellularLocation>
        <location evidence="3">Endoplasmic reticulum</location>
    </subcellularLocation>
    <text evidence="3">Associated with chromatin. It is unclear how LOXL2 is nuclear as it contains a signal sequence and has been shown to be secreted. However, a number of reports confirm its intracellular location and its key role in transcription regulation.</text>
</comment>
<comment type="alternative products">
    <event type="alternative splicing"/>
    <isoform>
        <id>P58022-1</id>
        <name>1</name>
        <sequence type="displayed"/>
    </isoform>
    <isoform>
        <id>P58022-2</id>
        <name>2</name>
        <sequence type="described" ref="VSP_016231 VSP_016232"/>
    </isoform>
</comment>
<comment type="tissue specificity">
    <text evidence="6">Ubiquitous. Highest expression in skin, lung and thymus. Present in chondrocytes: mainly expressed by chondrocytes in healing fractures and in epiphyseal growth plates (at protein level).</text>
</comment>
<comment type="induction">
    <text evidence="7">Strongly induced in hypoxia.</text>
</comment>
<comment type="PTM">
    <text evidence="3">The lysine tyrosylquinone cross-link (LTQ) is generated by condensation of the epsilon-amino group of a lysine with a topaquinone produced by oxidation of tyrosine.</text>
</comment>
<comment type="PTM">
    <text evidence="3">N-glycosylated. N-glycosylation on Asn-458 and Asn-646 may be essential for proper folding and secretion; may be composed of a fucosylated carbohydrates attached to a trimannose N-linked glycan core.</text>
</comment>
<comment type="similarity">
    <text evidence="11">Belongs to the lysyl oxidase family.</text>
</comment>
<reference key="1">
    <citation type="journal article" date="2005" name="Science">
        <title>The transcriptional landscape of the mammalian genome.</title>
        <authorList>
            <person name="Carninci P."/>
            <person name="Kasukawa T."/>
            <person name="Katayama S."/>
            <person name="Gough J."/>
            <person name="Frith M.C."/>
            <person name="Maeda N."/>
            <person name="Oyama R."/>
            <person name="Ravasi T."/>
            <person name="Lenhard B."/>
            <person name="Wells C."/>
            <person name="Kodzius R."/>
            <person name="Shimokawa K."/>
            <person name="Bajic V.B."/>
            <person name="Brenner S.E."/>
            <person name="Batalov S."/>
            <person name="Forrest A.R."/>
            <person name="Zavolan M."/>
            <person name="Davis M.J."/>
            <person name="Wilming L.G."/>
            <person name="Aidinis V."/>
            <person name="Allen J.E."/>
            <person name="Ambesi-Impiombato A."/>
            <person name="Apweiler R."/>
            <person name="Aturaliya R.N."/>
            <person name="Bailey T.L."/>
            <person name="Bansal M."/>
            <person name="Baxter L."/>
            <person name="Beisel K.W."/>
            <person name="Bersano T."/>
            <person name="Bono H."/>
            <person name="Chalk A.M."/>
            <person name="Chiu K.P."/>
            <person name="Choudhary V."/>
            <person name="Christoffels A."/>
            <person name="Clutterbuck D.R."/>
            <person name="Crowe M.L."/>
            <person name="Dalla E."/>
            <person name="Dalrymple B.P."/>
            <person name="de Bono B."/>
            <person name="Della Gatta G."/>
            <person name="di Bernardo D."/>
            <person name="Down T."/>
            <person name="Engstrom P."/>
            <person name="Fagiolini M."/>
            <person name="Faulkner G."/>
            <person name="Fletcher C.F."/>
            <person name="Fukushima T."/>
            <person name="Furuno M."/>
            <person name="Futaki S."/>
            <person name="Gariboldi M."/>
            <person name="Georgii-Hemming P."/>
            <person name="Gingeras T.R."/>
            <person name="Gojobori T."/>
            <person name="Green R.E."/>
            <person name="Gustincich S."/>
            <person name="Harbers M."/>
            <person name="Hayashi Y."/>
            <person name="Hensch T.K."/>
            <person name="Hirokawa N."/>
            <person name="Hill D."/>
            <person name="Huminiecki L."/>
            <person name="Iacono M."/>
            <person name="Ikeo K."/>
            <person name="Iwama A."/>
            <person name="Ishikawa T."/>
            <person name="Jakt M."/>
            <person name="Kanapin A."/>
            <person name="Katoh M."/>
            <person name="Kawasawa Y."/>
            <person name="Kelso J."/>
            <person name="Kitamura H."/>
            <person name="Kitano H."/>
            <person name="Kollias G."/>
            <person name="Krishnan S.P."/>
            <person name="Kruger A."/>
            <person name="Kummerfeld S.K."/>
            <person name="Kurochkin I.V."/>
            <person name="Lareau L.F."/>
            <person name="Lazarevic D."/>
            <person name="Lipovich L."/>
            <person name="Liu J."/>
            <person name="Liuni S."/>
            <person name="McWilliam S."/>
            <person name="Madan Babu M."/>
            <person name="Madera M."/>
            <person name="Marchionni L."/>
            <person name="Matsuda H."/>
            <person name="Matsuzawa S."/>
            <person name="Miki H."/>
            <person name="Mignone F."/>
            <person name="Miyake S."/>
            <person name="Morris K."/>
            <person name="Mottagui-Tabar S."/>
            <person name="Mulder N."/>
            <person name="Nakano N."/>
            <person name="Nakauchi H."/>
            <person name="Ng P."/>
            <person name="Nilsson R."/>
            <person name="Nishiguchi S."/>
            <person name="Nishikawa S."/>
            <person name="Nori F."/>
            <person name="Ohara O."/>
            <person name="Okazaki Y."/>
            <person name="Orlando V."/>
            <person name="Pang K.C."/>
            <person name="Pavan W.J."/>
            <person name="Pavesi G."/>
            <person name="Pesole G."/>
            <person name="Petrovsky N."/>
            <person name="Piazza S."/>
            <person name="Reed J."/>
            <person name="Reid J.F."/>
            <person name="Ring B.Z."/>
            <person name="Ringwald M."/>
            <person name="Rost B."/>
            <person name="Ruan Y."/>
            <person name="Salzberg S.L."/>
            <person name="Sandelin A."/>
            <person name="Schneider C."/>
            <person name="Schoenbach C."/>
            <person name="Sekiguchi K."/>
            <person name="Semple C.A."/>
            <person name="Seno S."/>
            <person name="Sessa L."/>
            <person name="Sheng Y."/>
            <person name="Shibata Y."/>
            <person name="Shimada H."/>
            <person name="Shimada K."/>
            <person name="Silva D."/>
            <person name="Sinclair B."/>
            <person name="Sperling S."/>
            <person name="Stupka E."/>
            <person name="Sugiura K."/>
            <person name="Sultana R."/>
            <person name="Takenaka Y."/>
            <person name="Taki K."/>
            <person name="Tammoja K."/>
            <person name="Tan S.L."/>
            <person name="Tang S."/>
            <person name="Taylor M.S."/>
            <person name="Tegner J."/>
            <person name="Teichmann S.A."/>
            <person name="Ueda H.R."/>
            <person name="van Nimwegen E."/>
            <person name="Verardo R."/>
            <person name="Wei C.L."/>
            <person name="Yagi K."/>
            <person name="Yamanishi H."/>
            <person name="Zabarovsky E."/>
            <person name="Zhu S."/>
            <person name="Zimmer A."/>
            <person name="Hide W."/>
            <person name="Bult C."/>
            <person name="Grimmond S.M."/>
            <person name="Teasdale R.D."/>
            <person name="Liu E.T."/>
            <person name="Brusic V."/>
            <person name="Quackenbush J."/>
            <person name="Wahlestedt C."/>
            <person name="Mattick J.S."/>
            <person name="Hume D.A."/>
            <person name="Kai C."/>
            <person name="Sasaki D."/>
            <person name="Tomaru Y."/>
            <person name="Fukuda S."/>
            <person name="Kanamori-Katayama M."/>
            <person name="Suzuki M."/>
            <person name="Aoki J."/>
            <person name="Arakawa T."/>
            <person name="Iida J."/>
            <person name="Imamura K."/>
            <person name="Itoh M."/>
            <person name="Kato T."/>
            <person name="Kawaji H."/>
            <person name="Kawagashira N."/>
            <person name="Kawashima T."/>
            <person name="Kojima M."/>
            <person name="Kondo S."/>
            <person name="Konno H."/>
            <person name="Nakano K."/>
            <person name="Ninomiya N."/>
            <person name="Nishio T."/>
            <person name="Okada M."/>
            <person name="Plessy C."/>
            <person name="Shibata K."/>
            <person name="Shiraki T."/>
            <person name="Suzuki S."/>
            <person name="Tagami M."/>
            <person name="Waki K."/>
            <person name="Watahiki A."/>
            <person name="Okamura-Oho Y."/>
            <person name="Suzuki H."/>
            <person name="Kawai J."/>
            <person name="Hayashizaki Y."/>
        </authorList>
    </citation>
    <scope>NUCLEOTIDE SEQUENCE [LARGE SCALE MRNA] (ISOFORMS 1 AND 2)</scope>
    <source>
        <strain>C57BL/6J</strain>
        <tissue>Embryo</tissue>
        <tissue>Head</tissue>
    </source>
</reference>
<reference key="2">
    <citation type="journal article" date="2000" name="Matrix Biol.">
        <title>The mouse lysyl oxidase-like 2 gene (mLOXL2) maps to chromosome 14 and is highly expressed in skin, lung and thymus.</title>
        <authorList>
            <person name="Jourdan-Le Saux C."/>
            <person name="Le Saux O."/>
            <person name="Gleyzal C."/>
            <person name="Sommer P."/>
            <person name="Csiszar K."/>
        </authorList>
    </citation>
    <scope>NUCLEOTIDE SEQUENCE [MRNA] OF 558-776 (ISOFORM 1)</scope>
</reference>
<reference key="3">
    <citation type="journal article" date="2011" name="Blood">
        <title>Lysyl oxidase-like protein-2 regulates sprouting angiogenesis and type IV collagen assembly in the endothelial basement membrane.</title>
        <authorList>
            <person name="Bignon M."/>
            <person name="Pichol-Thievend C."/>
            <person name="Hardouin J."/>
            <person name="Malbouyres M."/>
            <person name="Brechot N."/>
            <person name="Nasciutti L."/>
            <person name="Barret A."/>
            <person name="Teillon J."/>
            <person name="Guillon E."/>
            <person name="Etienne E."/>
            <person name="Caron M."/>
            <person name="Joubert-Caron R."/>
            <person name="Monnot C."/>
            <person name="Ruggiero F."/>
            <person name="Muller L."/>
            <person name="Germain S."/>
        </authorList>
    </citation>
    <scope>INDUCTION</scope>
</reference>
<reference key="4">
    <citation type="journal article" date="2011" name="J. Biol. Chem.">
        <title>Lysyl oxidase-like-2 (LOXL2) is a major isoform in chondrocytes and is critically required for differentiation.</title>
        <authorList>
            <person name="Iftikhar M."/>
            <person name="Hurtado P."/>
            <person name="Bais M.V."/>
            <person name="Wigner N."/>
            <person name="Stephens D.N."/>
            <person name="Gerstenfeld L.C."/>
            <person name="Trackman P.C."/>
        </authorList>
    </citation>
    <scope>FUNCTION</scope>
    <scope>TISSUE SPECIFICITY</scope>
</reference>
<reference key="5">
    <citation type="journal article" date="2014" name="Biol. Open">
        <title>LOXL2 catalytically inactive mutants mediate epithelial-to-mesenchymal transition.</title>
        <authorList>
            <person name="Cuevas E.P."/>
            <person name="Moreno-Bueno G."/>
            <person name="Canesin G."/>
            <person name="Santos V."/>
            <person name="Portillo F."/>
            <person name="Cano A."/>
        </authorList>
    </citation>
    <scope>MUTAGENESIS OF 547-ALA--ILE-667</scope>
</reference>
<reference key="6">
    <citation type="journal article" date="2015" name="Mol. Cell">
        <title>LOXL2 oxidizes methylated TAF10 and controls TFIID-dependent genes during neural progenitor differentiation.</title>
        <authorList>
            <person name="Iturbide A."/>
            <person name="Pascual-Reguant L."/>
            <person name="Fargas L."/>
            <person name="Cebria J.P."/>
            <person name="Alsina B."/>
            <person name="Garcia de Herreros A."/>
            <person name="Peiro S."/>
        </authorList>
    </citation>
    <scope>FUNCTION</scope>
</reference>
<accession>P58022</accession>
<accession>Q8BRE6</accession>
<accession>Q8BS86</accession>
<accession>Q8C4K0</accession>
<accession>Q9JJ39</accession>
<gene>
    <name type="primary">Loxl2</name>
</gene>
<organism>
    <name type="scientific">Mus musculus</name>
    <name type="common">Mouse</name>
    <dbReference type="NCBI Taxonomy" id="10090"/>
    <lineage>
        <taxon>Eukaryota</taxon>
        <taxon>Metazoa</taxon>
        <taxon>Chordata</taxon>
        <taxon>Craniata</taxon>
        <taxon>Vertebrata</taxon>
        <taxon>Euteleostomi</taxon>
        <taxon>Mammalia</taxon>
        <taxon>Eutheria</taxon>
        <taxon>Euarchontoglires</taxon>
        <taxon>Glires</taxon>
        <taxon>Rodentia</taxon>
        <taxon>Myomorpha</taxon>
        <taxon>Muroidea</taxon>
        <taxon>Muridae</taxon>
        <taxon>Murinae</taxon>
        <taxon>Mus</taxon>
        <taxon>Mus</taxon>
    </lineage>
</organism>
<keyword id="KW-0025">Alternative splicing</keyword>
<keyword id="KW-0084">Basement membrane</keyword>
<keyword id="KW-0106">Calcium</keyword>
<keyword id="KW-0156">Chromatin regulator</keyword>
<keyword id="KW-0158">Chromosome</keyword>
<keyword id="KW-0186">Copper</keyword>
<keyword id="KW-1015">Disulfide bond</keyword>
<keyword id="KW-0256">Endoplasmic reticulum</keyword>
<keyword id="KW-0272">Extracellular matrix</keyword>
<keyword id="KW-0325">Glycoprotein</keyword>
<keyword id="KW-0886">LTQ</keyword>
<keyword id="KW-0479">Metal-binding</keyword>
<keyword id="KW-0539">Nucleus</keyword>
<keyword id="KW-0560">Oxidoreductase</keyword>
<keyword id="KW-1185">Reference proteome</keyword>
<keyword id="KW-0677">Repeat</keyword>
<keyword id="KW-0678">Repressor</keyword>
<keyword id="KW-0964">Secreted</keyword>
<keyword id="KW-0732">Signal</keyword>
<keyword id="KW-0801">TPQ</keyword>
<keyword id="KW-0804">Transcription</keyword>
<keyword id="KW-0805">Transcription regulation</keyword>
<feature type="signal peptide" evidence="4">
    <location>
        <begin position="1"/>
        <end position="25"/>
    </location>
</feature>
<feature type="chain" id="PRO_0000042854" description="Lysyl oxidase homolog 2">
    <location>
        <begin position="26"/>
        <end position="776"/>
    </location>
</feature>
<feature type="domain" description="SRCR 1" evidence="5">
    <location>
        <begin position="61"/>
        <end position="162"/>
    </location>
</feature>
<feature type="domain" description="SRCR 2" evidence="5">
    <location>
        <begin position="191"/>
        <end position="305"/>
    </location>
</feature>
<feature type="domain" description="SRCR 3" evidence="5">
    <location>
        <begin position="329"/>
        <end position="428"/>
    </location>
</feature>
<feature type="domain" description="SRCR 4" evidence="5">
    <location>
        <begin position="438"/>
        <end position="546"/>
    </location>
</feature>
<feature type="region of interest" description="Lysyl-oxidase like" evidence="1">
    <location>
        <begin position="550"/>
        <end position="753"/>
    </location>
</feature>
<feature type="binding site" evidence="3">
    <location>
        <position position="551"/>
    </location>
    <ligand>
        <name>Ca(2+)</name>
        <dbReference type="ChEBI" id="CHEBI:29108"/>
    </ligand>
</feature>
<feature type="binding site" evidence="3">
    <location>
        <position position="552"/>
    </location>
    <ligand>
        <name>Ca(2+)</name>
        <dbReference type="ChEBI" id="CHEBI:29108"/>
    </ligand>
</feature>
<feature type="binding site" evidence="3">
    <location>
        <position position="628"/>
    </location>
    <ligand>
        <name>Cu cation</name>
        <dbReference type="ChEBI" id="CHEBI:23378"/>
    </ligand>
</feature>
<feature type="binding site" evidence="3">
    <location>
        <position position="630"/>
    </location>
    <ligand>
        <name>Cu cation</name>
        <dbReference type="ChEBI" id="CHEBI:23378"/>
    </ligand>
</feature>
<feature type="binding site" evidence="3">
    <location>
        <position position="632"/>
    </location>
    <ligand>
        <name>Cu cation</name>
        <dbReference type="ChEBI" id="CHEBI:23378"/>
    </ligand>
</feature>
<feature type="binding site" evidence="3">
    <location>
        <position position="724"/>
    </location>
    <ligand>
        <name>Ca(2+)</name>
        <dbReference type="ChEBI" id="CHEBI:29108"/>
    </ligand>
</feature>
<feature type="binding site" evidence="3">
    <location>
        <position position="726"/>
    </location>
    <ligand>
        <name>Ca(2+)</name>
        <dbReference type="ChEBI" id="CHEBI:29108"/>
    </ligand>
</feature>
<feature type="binding site" evidence="3">
    <location>
        <position position="729"/>
    </location>
    <ligand>
        <name>Ca(2+)</name>
        <dbReference type="ChEBI" id="CHEBI:29108"/>
    </ligand>
</feature>
<feature type="binding site" evidence="3">
    <location>
        <position position="730"/>
    </location>
    <ligand>
        <name>Ca(2+)</name>
        <dbReference type="ChEBI" id="CHEBI:29108"/>
    </ligand>
</feature>
<feature type="modified residue" description="2',4',5'-topaquinone" evidence="2">
    <location>
        <position position="691"/>
    </location>
</feature>
<feature type="glycosylation site" description="N-linked (GlcNAc...) asparagine" evidence="4">
    <location>
        <position position="267"/>
    </location>
</feature>
<feature type="glycosylation site" description="N-linked (GlcNAc...) asparagine" evidence="4">
    <location>
        <position position="291"/>
    </location>
</feature>
<feature type="glycosylation site" description="N-linked (GlcNAc...) asparagine" evidence="4">
    <location>
        <position position="458"/>
    </location>
</feature>
<feature type="glycosylation site" description="N-linked (GlcNAc...) asparagine" evidence="4">
    <location>
        <position position="646"/>
    </location>
</feature>
<feature type="disulfide bond" evidence="5">
    <location>
        <begin position="87"/>
        <end position="151"/>
    </location>
</feature>
<feature type="disulfide bond" evidence="5">
    <location>
        <begin position="100"/>
        <end position="161"/>
    </location>
</feature>
<feature type="disulfide bond" evidence="5">
    <location>
        <begin position="131"/>
        <end position="141"/>
    </location>
</feature>
<feature type="disulfide bond" evidence="5">
    <location>
        <begin position="221"/>
        <end position="294"/>
    </location>
</feature>
<feature type="disulfide bond" evidence="5">
    <location>
        <begin position="234"/>
        <end position="304"/>
    </location>
</feature>
<feature type="disulfide bond" evidence="5">
    <location>
        <begin position="268"/>
        <end position="278"/>
    </location>
</feature>
<feature type="disulfide bond" evidence="5">
    <location>
        <begin position="354"/>
        <end position="417"/>
    </location>
</feature>
<feature type="disulfide bond" evidence="5">
    <location>
        <begin position="367"/>
        <end position="427"/>
    </location>
</feature>
<feature type="disulfide bond" evidence="5">
    <location>
        <begin position="398"/>
        <end position="408"/>
    </location>
</feature>
<feature type="disulfide bond" evidence="5">
    <location>
        <begin position="467"/>
        <end position="532"/>
    </location>
</feature>
<feature type="disulfide bond" evidence="5">
    <location>
        <begin position="480"/>
        <end position="545"/>
    </location>
</feature>
<feature type="disulfide bond" evidence="5">
    <location>
        <begin position="514"/>
        <end position="524"/>
    </location>
</feature>
<feature type="disulfide bond" evidence="3">
    <location>
        <begin position="575"/>
        <end position="627"/>
    </location>
</feature>
<feature type="disulfide bond" evidence="3">
    <location>
        <begin position="581"/>
        <end position="697"/>
    </location>
</feature>
<feature type="disulfide bond" evidence="3">
    <location>
        <begin position="659"/>
        <end position="675"/>
    </location>
</feature>
<feature type="disulfide bond" evidence="3">
    <location>
        <begin position="665"/>
        <end position="687"/>
    </location>
</feature>
<feature type="disulfide bond" evidence="5">
    <location>
        <begin position="734"/>
        <end position="748"/>
    </location>
</feature>
<feature type="cross-link" description="Lysine tyrosylquinone (Lys-Tyr)" evidence="2">
    <location>
        <begin position="655"/>
        <end position="691"/>
    </location>
</feature>
<feature type="splice variant" id="VSP_016231" description="In isoform 2." evidence="10">
    <original>VVINPNYEVPESDF</original>
    <variation>PSNRVLVRAGQTPY</variation>
    <location>
        <begin position="714"/>
        <end position="727"/>
    </location>
</feature>
<feature type="splice variant" id="VSP_016232" description="In isoform 2." evidence="10">
    <location>
        <begin position="728"/>
        <end position="776"/>
    </location>
</feature>
<feature type="mutagenesis site" description="Abolishes oxidase activity and secretion but does not affect binding to the CDH1 promoter, repression of CDH1 transcription, interaction with SNAI1, binding to the CDH1 promoter, repression of CDH1 transcription or ability to induce EMT." evidence="8">
    <location>
        <begin position="547"/>
        <end position="667"/>
    </location>
</feature>
<feature type="sequence conflict" description="In Ref. 1; BAC32186." evidence="11" ref="1">
    <original>K</original>
    <variation>E</variation>
    <location>
        <position position="320"/>
    </location>
</feature>
<feature type="sequence conflict" description="In Ref. 2; AAF29046." evidence="11" ref="2">
    <original>IVQ</original>
    <variation>HEE</variation>
    <location>
        <begin position="558"/>
        <end position="560"/>
    </location>
</feature>
<evidence type="ECO:0000250" key="1"/>
<evidence type="ECO:0000250" key="2">
    <source>
        <dbReference type="UniProtKB" id="P33072"/>
    </source>
</evidence>
<evidence type="ECO:0000250" key="3">
    <source>
        <dbReference type="UniProtKB" id="Q9Y4K0"/>
    </source>
</evidence>
<evidence type="ECO:0000255" key="4"/>
<evidence type="ECO:0000255" key="5">
    <source>
        <dbReference type="PROSITE-ProRule" id="PRU00196"/>
    </source>
</evidence>
<evidence type="ECO:0000269" key="6">
    <source>
    </source>
</evidence>
<evidence type="ECO:0000269" key="7">
    <source>
    </source>
</evidence>
<evidence type="ECO:0000269" key="8">
    <source>
    </source>
</evidence>
<evidence type="ECO:0000269" key="9">
    <source>
    </source>
</evidence>
<evidence type="ECO:0000303" key="10">
    <source>
    </source>
</evidence>
<evidence type="ECO:0000305" key="11"/>